<feature type="signal peptide" evidence="1">
    <location>
        <begin position="1"/>
        <end position="23"/>
    </location>
</feature>
<feature type="chain" id="PRO_0000379788" description="N16.2 matrix protein">
    <location>
        <begin position="24"/>
        <end position="129"/>
    </location>
</feature>
<feature type="repeat" description="1">
    <location>
        <begin position="91"/>
        <end position="92"/>
    </location>
</feature>
<feature type="repeat" description="2">
    <location>
        <begin position="93"/>
        <end position="94"/>
    </location>
</feature>
<feature type="repeat" description="3">
    <location>
        <begin position="95"/>
        <end position="96"/>
    </location>
</feature>
<feature type="repeat" description="4">
    <location>
        <begin position="97"/>
        <end position="98"/>
    </location>
</feature>
<feature type="repeat" description="5">
    <location>
        <begin position="99"/>
        <end position="100"/>
    </location>
</feature>
<feature type="region of interest" description="5 X 2 AA tandem repeats of N-G">
    <location>
        <begin position="91"/>
        <end position="100"/>
    </location>
</feature>
<name>MA162_PINFU</name>
<reference key="1">
    <citation type="journal article" date="1999" name="FEBS Lett.">
        <title>A new matrix protein family related to the nacreous layer formation of Pinctada fucata.</title>
        <authorList>
            <person name="Samata T."/>
            <person name="Hayashi N."/>
            <person name="Kono M."/>
            <person name="Hasegawa K."/>
            <person name="Horita C."/>
            <person name="Akera S."/>
        </authorList>
    </citation>
    <scope>NUCLEOTIDE SEQUENCE [MRNA]</scope>
    <scope>PROTEIN SEQUENCE OF 24-57</scope>
    <scope>FUNCTION</scope>
    <scope>SUBCELLULAR LOCATION</scope>
    <scope>TISSUE SPECIFICITY</scope>
    <source>
        <tissue>Mantle</tissue>
        <tissue>Nacre</tissue>
    </source>
</reference>
<reference key="2">
    <citation type="journal article" date="2009" name="Science">
        <title>An acidic matrix protein, Pif, is a key macromolecule for nacre formation.</title>
        <authorList>
            <person name="Suzuki M."/>
            <person name="Saruwatari K."/>
            <person name="Kogure T."/>
            <person name="Yamamoto Y."/>
            <person name="Nishimura T."/>
            <person name="Kato T."/>
            <person name="Nagasawa H."/>
        </authorList>
    </citation>
    <scope>SUBUNIT</scope>
    <scope>FUNCTION</scope>
</reference>
<reference key="3">
    <citation type="journal article" date="2009" name="Science">
        <title>The molecular basis of nacre formation.</title>
        <authorList>
            <person name="Kroger N."/>
        </authorList>
    </citation>
    <scope>FUNCTION</scope>
</reference>
<accession>Q9UAH3</accession>
<organism>
    <name type="scientific">Pinctada fucata</name>
    <name type="common">Akoya pearl oyster</name>
    <name type="synonym">Pinctada imbricata fucata</name>
    <dbReference type="NCBI Taxonomy" id="50426"/>
    <lineage>
        <taxon>Eukaryota</taxon>
        <taxon>Metazoa</taxon>
        <taxon>Spiralia</taxon>
        <taxon>Lophotrochozoa</taxon>
        <taxon>Mollusca</taxon>
        <taxon>Bivalvia</taxon>
        <taxon>Autobranchia</taxon>
        <taxon>Pteriomorphia</taxon>
        <taxon>Pterioida</taxon>
        <taxon>Pterioidea</taxon>
        <taxon>Pteriidae</taxon>
        <taxon>Pinctada</taxon>
    </lineage>
</organism>
<keyword id="KW-0903">Direct protein sequencing</keyword>
<keyword id="KW-1015">Disulfide bond</keyword>
<keyword id="KW-0272">Extracellular matrix</keyword>
<keyword id="KW-0677">Repeat</keyword>
<keyword id="KW-0964">Secreted</keyword>
<keyword id="KW-0732">Signal</keyword>
<protein>
    <recommendedName>
        <fullName>N16.2 matrix protein</fullName>
    </recommendedName>
    <alternativeName>
        <fullName>N14#2</fullName>
    </alternativeName>
</protein>
<dbReference type="EMBL" id="AB023249">
    <property type="protein sequence ID" value="BAA83734.1"/>
    <property type="molecule type" value="mRNA"/>
</dbReference>
<dbReference type="GO" id="GO:0005576">
    <property type="term" value="C:extracellular region"/>
    <property type="evidence" value="ECO:0007669"/>
    <property type="project" value="UniProtKB-KW"/>
</dbReference>
<sequence>MKCTLRWTITALVLLGICHLARPAYHKKCGRYSYCWIPYDIERDRRDNGGKKCCFCRNAWSPWQCKEDERYEWLRCGHKFYYMCCYTDDDNGNGDGNGNGFNYLKSLYGGYGNGNGEFWEEYIDERYDK</sequence>
<comment type="function">
    <text evidence="1 2 3">May be specifically involved in the formation of the nacreous layer.</text>
</comment>
<comment type="subunit">
    <text evidence="2">Heterooligomer; disulfide-linked. Pif97, Pif80, N16 and other proteins form a complex.</text>
</comment>
<comment type="subcellular location">
    <subcellularLocation>
        <location evidence="1">Secreted</location>
        <location evidence="1">Extracellular space</location>
        <location evidence="1">Extracellular matrix</location>
    </subcellularLocation>
</comment>
<comment type="tissue specificity">
    <text evidence="1">Component of conchiolin, the organic matrix of nacre. Expressed at extremely high levels in the dorsal region of the mantle, which region may be responsible for the nacreous layer formation, but only in trace amounts at the mantle edge, which region may be responsible for the prismatic layer formation.</text>
</comment>
<comment type="similarity">
    <text evidence="4">Belongs to the N16 matrix protein family.</text>
</comment>
<proteinExistence type="evidence at protein level"/>
<evidence type="ECO:0000269" key="1">
    <source>
    </source>
</evidence>
<evidence type="ECO:0000269" key="2">
    <source>
    </source>
</evidence>
<evidence type="ECO:0000269" key="3">
    <source>
    </source>
</evidence>
<evidence type="ECO:0000305" key="4"/>